<reference key="1">
    <citation type="journal article" date="1997" name="Microbiology">
        <title>A 23.4 kb segment at the 69 degrees-70 degrees region of the Bacillus subtilis genome.</title>
        <authorList>
            <person name="Yamamoto H."/>
            <person name="Uchiyama S."/>
            <person name="Nugroho F.A."/>
            <person name="Sekiguchi J."/>
        </authorList>
    </citation>
    <scope>NUCLEOTIDE SEQUENCE [GENOMIC DNA]</scope>
    <source>
        <strain>168 / AC327</strain>
    </source>
</reference>
<reference key="2">
    <citation type="journal article" date="1997" name="Nature">
        <title>The complete genome sequence of the Gram-positive bacterium Bacillus subtilis.</title>
        <authorList>
            <person name="Kunst F."/>
            <person name="Ogasawara N."/>
            <person name="Moszer I."/>
            <person name="Albertini A.M."/>
            <person name="Alloni G."/>
            <person name="Azevedo V."/>
            <person name="Bertero M.G."/>
            <person name="Bessieres P."/>
            <person name="Bolotin A."/>
            <person name="Borchert S."/>
            <person name="Borriss R."/>
            <person name="Boursier L."/>
            <person name="Brans A."/>
            <person name="Braun M."/>
            <person name="Brignell S.C."/>
            <person name="Bron S."/>
            <person name="Brouillet S."/>
            <person name="Bruschi C.V."/>
            <person name="Caldwell B."/>
            <person name="Capuano V."/>
            <person name="Carter N.M."/>
            <person name="Choi S.-K."/>
            <person name="Codani J.-J."/>
            <person name="Connerton I.F."/>
            <person name="Cummings N.J."/>
            <person name="Daniel R.A."/>
            <person name="Denizot F."/>
            <person name="Devine K.M."/>
            <person name="Duesterhoeft A."/>
            <person name="Ehrlich S.D."/>
            <person name="Emmerson P.T."/>
            <person name="Entian K.-D."/>
            <person name="Errington J."/>
            <person name="Fabret C."/>
            <person name="Ferrari E."/>
            <person name="Foulger D."/>
            <person name="Fritz C."/>
            <person name="Fujita M."/>
            <person name="Fujita Y."/>
            <person name="Fuma S."/>
            <person name="Galizzi A."/>
            <person name="Galleron N."/>
            <person name="Ghim S.-Y."/>
            <person name="Glaser P."/>
            <person name="Goffeau A."/>
            <person name="Golightly E.J."/>
            <person name="Grandi G."/>
            <person name="Guiseppi G."/>
            <person name="Guy B.J."/>
            <person name="Haga K."/>
            <person name="Haiech J."/>
            <person name="Harwood C.R."/>
            <person name="Henaut A."/>
            <person name="Hilbert H."/>
            <person name="Holsappel S."/>
            <person name="Hosono S."/>
            <person name="Hullo M.-F."/>
            <person name="Itaya M."/>
            <person name="Jones L.-M."/>
            <person name="Joris B."/>
            <person name="Karamata D."/>
            <person name="Kasahara Y."/>
            <person name="Klaerr-Blanchard M."/>
            <person name="Klein C."/>
            <person name="Kobayashi Y."/>
            <person name="Koetter P."/>
            <person name="Koningstein G."/>
            <person name="Krogh S."/>
            <person name="Kumano M."/>
            <person name="Kurita K."/>
            <person name="Lapidus A."/>
            <person name="Lardinois S."/>
            <person name="Lauber J."/>
            <person name="Lazarevic V."/>
            <person name="Lee S.-M."/>
            <person name="Levine A."/>
            <person name="Liu H."/>
            <person name="Masuda S."/>
            <person name="Mauel C."/>
            <person name="Medigue C."/>
            <person name="Medina N."/>
            <person name="Mellado R.P."/>
            <person name="Mizuno M."/>
            <person name="Moestl D."/>
            <person name="Nakai S."/>
            <person name="Noback M."/>
            <person name="Noone D."/>
            <person name="O'Reilly M."/>
            <person name="Ogawa K."/>
            <person name="Ogiwara A."/>
            <person name="Oudega B."/>
            <person name="Park S.-H."/>
            <person name="Parro V."/>
            <person name="Pohl T.M."/>
            <person name="Portetelle D."/>
            <person name="Porwollik S."/>
            <person name="Prescott A.M."/>
            <person name="Presecan E."/>
            <person name="Pujic P."/>
            <person name="Purnelle B."/>
            <person name="Rapoport G."/>
            <person name="Rey M."/>
            <person name="Reynolds S."/>
            <person name="Rieger M."/>
            <person name="Rivolta C."/>
            <person name="Rocha E."/>
            <person name="Roche B."/>
            <person name="Rose M."/>
            <person name="Sadaie Y."/>
            <person name="Sato T."/>
            <person name="Scanlan E."/>
            <person name="Schleich S."/>
            <person name="Schroeter R."/>
            <person name="Scoffone F."/>
            <person name="Sekiguchi J."/>
            <person name="Sekowska A."/>
            <person name="Seror S.J."/>
            <person name="Serror P."/>
            <person name="Shin B.-S."/>
            <person name="Soldo B."/>
            <person name="Sorokin A."/>
            <person name="Tacconi E."/>
            <person name="Takagi T."/>
            <person name="Takahashi H."/>
            <person name="Takemaru K."/>
            <person name="Takeuchi M."/>
            <person name="Tamakoshi A."/>
            <person name="Tanaka T."/>
            <person name="Terpstra P."/>
            <person name="Tognoni A."/>
            <person name="Tosato V."/>
            <person name="Uchiyama S."/>
            <person name="Vandenbol M."/>
            <person name="Vannier F."/>
            <person name="Vassarotti A."/>
            <person name="Viari A."/>
            <person name="Wambutt R."/>
            <person name="Wedler E."/>
            <person name="Wedler H."/>
            <person name="Weitzenegger T."/>
            <person name="Winters P."/>
            <person name="Wipat A."/>
            <person name="Yamamoto H."/>
            <person name="Yamane K."/>
            <person name="Yasumoto K."/>
            <person name="Yata K."/>
            <person name="Yoshida K."/>
            <person name="Yoshikawa H.-F."/>
            <person name="Zumstein E."/>
            <person name="Yoshikawa H."/>
            <person name="Danchin A."/>
        </authorList>
    </citation>
    <scope>NUCLEOTIDE SEQUENCE [LARGE SCALE GENOMIC DNA]</scope>
    <source>
        <strain>168</strain>
    </source>
</reference>
<keyword id="KW-1003">Cell membrane</keyword>
<keyword id="KW-0472">Membrane</keyword>
<keyword id="KW-1185">Reference proteome</keyword>
<keyword id="KW-0812">Transmembrane</keyword>
<keyword id="KW-1133">Transmembrane helix</keyword>
<keyword id="KW-0813">Transport</keyword>
<comment type="subcellular location">
    <subcellularLocation>
        <location>Cell membrane</location>
        <topology>Multi-pass membrane protein</topology>
    </subcellularLocation>
</comment>
<comment type="similarity">
    <text evidence="2">Belongs to the major facilitator superfamily.</text>
</comment>
<evidence type="ECO:0000255" key="1"/>
<evidence type="ECO:0000305" key="2"/>
<gene>
    <name type="primary">yfnC</name>
    <name type="ordered locus">BSU07320</name>
</gene>
<feature type="chain" id="PRO_0000349881" description="Uncharacterized MFS-type transporter YfnC">
    <location>
        <begin position="1"/>
        <end position="409"/>
    </location>
</feature>
<feature type="transmembrane region" description="Helical" evidence="1">
    <location>
        <begin position="22"/>
        <end position="42"/>
    </location>
</feature>
<feature type="transmembrane region" description="Helical" evidence="1">
    <location>
        <begin position="58"/>
        <end position="78"/>
    </location>
</feature>
<feature type="transmembrane region" description="Helical" evidence="1">
    <location>
        <begin position="99"/>
        <end position="119"/>
    </location>
</feature>
<feature type="transmembrane region" description="Helical" evidence="1">
    <location>
        <begin position="174"/>
        <end position="194"/>
    </location>
</feature>
<feature type="transmembrane region" description="Helical" evidence="1">
    <location>
        <begin position="217"/>
        <end position="237"/>
    </location>
</feature>
<feature type="transmembrane region" description="Helical" evidence="1">
    <location>
        <begin position="266"/>
        <end position="286"/>
    </location>
</feature>
<feature type="transmembrane region" description="Helical" evidence="1">
    <location>
        <begin position="293"/>
        <end position="312"/>
    </location>
</feature>
<feature type="transmembrane region" description="Helical" evidence="1">
    <location>
        <begin position="316"/>
        <end position="338"/>
    </location>
</feature>
<feature type="transmembrane region" description="Helical" evidence="1">
    <location>
        <begin position="353"/>
        <end position="373"/>
    </location>
</feature>
<feature type="transmembrane region" description="Helical" evidence="1">
    <location>
        <begin position="378"/>
        <end position="398"/>
    </location>
</feature>
<name>YFNC_BACSU</name>
<dbReference type="EMBL" id="D86418">
    <property type="protein sequence ID" value="BAA20112.1"/>
    <property type="molecule type" value="Genomic_DNA"/>
</dbReference>
<dbReference type="EMBL" id="AL009126">
    <property type="protein sequence ID" value="CAB12551.1"/>
    <property type="molecule type" value="Genomic_DNA"/>
</dbReference>
<dbReference type="PIR" id="F69814">
    <property type="entry name" value="F69814"/>
</dbReference>
<dbReference type="RefSeq" id="NP_388613.1">
    <property type="nucleotide sequence ID" value="NC_000964.3"/>
</dbReference>
<dbReference type="RefSeq" id="WP_003243467.1">
    <property type="nucleotide sequence ID" value="NZ_OZ025638.1"/>
</dbReference>
<dbReference type="SMR" id="O06481"/>
<dbReference type="FunCoup" id="O06481">
    <property type="interactions" value="4"/>
</dbReference>
<dbReference type="STRING" id="224308.BSU07320"/>
<dbReference type="PaxDb" id="224308-BSU07320"/>
<dbReference type="EnsemblBacteria" id="CAB12551">
    <property type="protein sequence ID" value="CAB12551"/>
    <property type="gene ID" value="BSU_07320"/>
</dbReference>
<dbReference type="GeneID" id="936104"/>
<dbReference type="KEGG" id="bsu:BSU07320"/>
<dbReference type="PATRIC" id="fig|224308.179.peg.794"/>
<dbReference type="eggNOG" id="COG2223">
    <property type="taxonomic scope" value="Bacteria"/>
</dbReference>
<dbReference type="InParanoid" id="O06481"/>
<dbReference type="OrthoDB" id="9770492at2"/>
<dbReference type="PhylomeDB" id="O06481"/>
<dbReference type="BioCyc" id="BSUB:BSU07320-MONOMER"/>
<dbReference type="Proteomes" id="UP000001570">
    <property type="component" value="Chromosome"/>
</dbReference>
<dbReference type="GO" id="GO:0005886">
    <property type="term" value="C:plasma membrane"/>
    <property type="evidence" value="ECO:0000318"/>
    <property type="project" value="GO_Central"/>
</dbReference>
<dbReference type="GO" id="GO:0022857">
    <property type="term" value="F:transmembrane transporter activity"/>
    <property type="evidence" value="ECO:0007669"/>
    <property type="project" value="InterPro"/>
</dbReference>
<dbReference type="CDD" id="cd17478">
    <property type="entry name" value="MFS_FsR"/>
    <property type="match status" value="1"/>
</dbReference>
<dbReference type="Gene3D" id="1.20.1250.20">
    <property type="entry name" value="MFS general substrate transporter like domains"/>
    <property type="match status" value="2"/>
</dbReference>
<dbReference type="InterPro" id="IPR011701">
    <property type="entry name" value="MFS"/>
</dbReference>
<dbReference type="InterPro" id="IPR020846">
    <property type="entry name" value="MFS_dom"/>
</dbReference>
<dbReference type="InterPro" id="IPR036259">
    <property type="entry name" value="MFS_trans_sf"/>
</dbReference>
<dbReference type="PANTHER" id="PTHR43129">
    <property type="entry name" value="FOSMIDOMYCIN RESISTANCE PROTEIN"/>
    <property type="match status" value="1"/>
</dbReference>
<dbReference type="PANTHER" id="PTHR43129:SF1">
    <property type="entry name" value="FOSMIDOMYCIN RESISTANCE PROTEIN"/>
    <property type="match status" value="1"/>
</dbReference>
<dbReference type="Pfam" id="PF07690">
    <property type="entry name" value="MFS_1"/>
    <property type="match status" value="1"/>
</dbReference>
<dbReference type="SUPFAM" id="SSF103473">
    <property type="entry name" value="MFS general substrate transporter"/>
    <property type="match status" value="1"/>
</dbReference>
<dbReference type="PROSITE" id="PS50850">
    <property type="entry name" value="MFS"/>
    <property type="match status" value="1"/>
</dbReference>
<sequence length="409" mass="43488">MAIAAPLKEKTVQKPGTTVYPILIIIGICHMLNDSLQAVIPAMFPILERSMSLTFTQLGIIAFTLNMVSSVMQPVVGWYTDKRPRPYALPVGLTASMLGILGLAFAPSFITILCCVFFIGLGSAIFHPEGSRVAYMAAGTKRGLAQSIYQVGGNSGQAMAPLITALILVPLGQFGAVWFTLVAALAVMFLMYIAKWYASRLGSLAQKSGKQKKTAENTAITKSVVSALIIIIFLIFARSWYTSAIGNFYTFYAMDTYHVSIQQAQSYIFVFLLFGAIGTFLGGPLADRFGKRFVILGSLLCSAPLAIVLPFAGPVLAYGVLALIGLVLMSSFSVTVVYAQELVPGKIGTMSGLTVGLAFGMGAIGAVALGALIDAAGLTPTMIAIAFLPVLGILAFLLPSDQKLREWHS</sequence>
<proteinExistence type="inferred from homology"/>
<protein>
    <recommendedName>
        <fullName>Uncharacterized MFS-type transporter YfnC</fullName>
    </recommendedName>
</protein>
<organism>
    <name type="scientific">Bacillus subtilis (strain 168)</name>
    <dbReference type="NCBI Taxonomy" id="224308"/>
    <lineage>
        <taxon>Bacteria</taxon>
        <taxon>Bacillati</taxon>
        <taxon>Bacillota</taxon>
        <taxon>Bacilli</taxon>
        <taxon>Bacillales</taxon>
        <taxon>Bacillaceae</taxon>
        <taxon>Bacillus</taxon>
    </lineage>
</organism>
<accession>O06481</accession>
<accession>Q797A9</accession>